<feature type="chain" id="PRO_0000148843" description="Aspartyl/glutamyl-tRNA(Asn/Gln) amidotransferase subunit B">
    <location>
        <begin position="1"/>
        <end position="480"/>
    </location>
</feature>
<comment type="function">
    <text evidence="1">Allows the formation of correctly charged Asn-tRNA(Asn) or Gln-tRNA(Gln) through the transamidation of misacylated Asp-tRNA(Asn) or Glu-tRNA(Gln) in organisms which lack either or both of asparaginyl-tRNA or glutaminyl-tRNA synthetases. The reaction takes place in the presence of glutamine and ATP through an activated phospho-Asp-tRNA(Asn) or phospho-Glu-tRNA(Gln).</text>
</comment>
<comment type="catalytic activity">
    <reaction evidence="1">
        <text>L-glutamyl-tRNA(Gln) + L-glutamine + ATP + H2O = L-glutaminyl-tRNA(Gln) + L-glutamate + ADP + phosphate + H(+)</text>
        <dbReference type="Rhea" id="RHEA:17521"/>
        <dbReference type="Rhea" id="RHEA-COMP:9681"/>
        <dbReference type="Rhea" id="RHEA-COMP:9684"/>
        <dbReference type="ChEBI" id="CHEBI:15377"/>
        <dbReference type="ChEBI" id="CHEBI:15378"/>
        <dbReference type="ChEBI" id="CHEBI:29985"/>
        <dbReference type="ChEBI" id="CHEBI:30616"/>
        <dbReference type="ChEBI" id="CHEBI:43474"/>
        <dbReference type="ChEBI" id="CHEBI:58359"/>
        <dbReference type="ChEBI" id="CHEBI:78520"/>
        <dbReference type="ChEBI" id="CHEBI:78521"/>
        <dbReference type="ChEBI" id="CHEBI:456216"/>
    </reaction>
</comment>
<comment type="catalytic activity">
    <reaction evidence="1">
        <text>L-aspartyl-tRNA(Asn) + L-glutamine + ATP + H2O = L-asparaginyl-tRNA(Asn) + L-glutamate + ADP + phosphate + 2 H(+)</text>
        <dbReference type="Rhea" id="RHEA:14513"/>
        <dbReference type="Rhea" id="RHEA-COMP:9674"/>
        <dbReference type="Rhea" id="RHEA-COMP:9677"/>
        <dbReference type="ChEBI" id="CHEBI:15377"/>
        <dbReference type="ChEBI" id="CHEBI:15378"/>
        <dbReference type="ChEBI" id="CHEBI:29985"/>
        <dbReference type="ChEBI" id="CHEBI:30616"/>
        <dbReference type="ChEBI" id="CHEBI:43474"/>
        <dbReference type="ChEBI" id="CHEBI:58359"/>
        <dbReference type="ChEBI" id="CHEBI:78515"/>
        <dbReference type="ChEBI" id="CHEBI:78516"/>
        <dbReference type="ChEBI" id="CHEBI:456216"/>
    </reaction>
</comment>
<comment type="subunit">
    <text evidence="1">Heterotrimer of A, B and C subunits.</text>
</comment>
<comment type="similarity">
    <text evidence="1">Belongs to the GatB/GatE family. GatB subfamily.</text>
</comment>
<evidence type="ECO:0000255" key="1">
    <source>
        <dbReference type="HAMAP-Rule" id="MF_00121"/>
    </source>
</evidence>
<accession>Q8E3P5</accession>
<sequence>MNFETVIGLEVHVELNTNSKIFSPSSAHFGQEQNANTNVIDWSFPGVLPVMNKGVVDAGIKAALALNMDIHQNMHFDRKNYFYPDNPKAYQISQFDEPIGYNGWIEIELEDGTRKKIRIERAHLEEDAGKNTHGTDGYSYVDLNRQGVPLIEIVSEADMRSPEEAYAYLTALKEIIQYTGISDVKMEEGSMRVDANISLRPYGQEEFGTKAELKNLNSFNNVRKGLIHEEKRQAQVLRSGGQIQQETRRFDETTGETILMRVKEGSSDYRYFPEPDLPLFDISDEWIDQVRLELPEFPQERRAKYVSSFGLSSYDASQLTATKATSDFFEKAVAIGGDAKQVSNWLQGEVAQFLNSESKSIEEIGLTPENLVEMISLIADGTISSKIAKKVFVHLAKNGGSAEEFVKKAGLVQISDPEVLIPIIHQVFADNEAAVIDFKSGKRNADKAFTGYLMKATKGQANPQVALKLLAQELAKLKEE</sequence>
<dbReference type="EC" id="6.3.5.-" evidence="1"/>
<dbReference type="EMBL" id="AL766852">
    <property type="protein sequence ID" value="CAD47370.1"/>
    <property type="molecule type" value="Genomic_DNA"/>
</dbReference>
<dbReference type="RefSeq" id="WP_001008631.1">
    <property type="nucleotide sequence ID" value="NC_004368.1"/>
</dbReference>
<dbReference type="SMR" id="Q8E3P5"/>
<dbReference type="KEGG" id="san:gbs1711"/>
<dbReference type="eggNOG" id="COG0064">
    <property type="taxonomic scope" value="Bacteria"/>
</dbReference>
<dbReference type="HOGENOM" id="CLU_019240_0_0_9"/>
<dbReference type="Proteomes" id="UP000000823">
    <property type="component" value="Chromosome"/>
</dbReference>
<dbReference type="GO" id="GO:0050566">
    <property type="term" value="F:asparaginyl-tRNA synthase (glutamine-hydrolyzing) activity"/>
    <property type="evidence" value="ECO:0007669"/>
    <property type="project" value="RHEA"/>
</dbReference>
<dbReference type="GO" id="GO:0005524">
    <property type="term" value="F:ATP binding"/>
    <property type="evidence" value="ECO:0007669"/>
    <property type="project" value="UniProtKB-KW"/>
</dbReference>
<dbReference type="GO" id="GO:0050567">
    <property type="term" value="F:glutaminyl-tRNA synthase (glutamine-hydrolyzing) activity"/>
    <property type="evidence" value="ECO:0007669"/>
    <property type="project" value="UniProtKB-UniRule"/>
</dbReference>
<dbReference type="GO" id="GO:0070681">
    <property type="term" value="P:glutaminyl-tRNAGln biosynthesis via transamidation"/>
    <property type="evidence" value="ECO:0007669"/>
    <property type="project" value="TreeGrafter"/>
</dbReference>
<dbReference type="GO" id="GO:0006412">
    <property type="term" value="P:translation"/>
    <property type="evidence" value="ECO:0007669"/>
    <property type="project" value="UniProtKB-UniRule"/>
</dbReference>
<dbReference type="FunFam" id="1.10.10.410:FF:000001">
    <property type="entry name" value="Aspartyl/glutamyl-tRNA(Asn/Gln) amidotransferase subunit B"/>
    <property type="match status" value="1"/>
</dbReference>
<dbReference type="FunFam" id="1.10.150.380:FF:000001">
    <property type="entry name" value="Aspartyl/glutamyl-tRNA(Asn/Gln) amidotransferase subunit B"/>
    <property type="match status" value="1"/>
</dbReference>
<dbReference type="Gene3D" id="1.10.10.410">
    <property type="match status" value="1"/>
</dbReference>
<dbReference type="Gene3D" id="1.10.150.380">
    <property type="entry name" value="GatB domain, N-terminal subdomain"/>
    <property type="match status" value="1"/>
</dbReference>
<dbReference type="HAMAP" id="MF_00121">
    <property type="entry name" value="GatB"/>
    <property type="match status" value="1"/>
</dbReference>
<dbReference type="InterPro" id="IPR017959">
    <property type="entry name" value="Asn/Gln-tRNA_amidoTrfase_suB/E"/>
</dbReference>
<dbReference type="InterPro" id="IPR006075">
    <property type="entry name" value="Asn/Gln-tRNA_Trfase_suB/E_cat"/>
</dbReference>
<dbReference type="InterPro" id="IPR018027">
    <property type="entry name" value="Asn/Gln_amidotransferase"/>
</dbReference>
<dbReference type="InterPro" id="IPR003789">
    <property type="entry name" value="Asn/Gln_tRNA_amidoTrase-B-like"/>
</dbReference>
<dbReference type="InterPro" id="IPR004413">
    <property type="entry name" value="GatB"/>
</dbReference>
<dbReference type="InterPro" id="IPR042114">
    <property type="entry name" value="GatB_C_1"/>
</dbReference>
<dbReference type="InterPro" id="IPR023168">
    <property type="entry name" value="GatB_Yqey_C_2"/>
</dbReference>
<dbReference type="InterPro" id="IPR017958">
    <property type="entry name" value="Gln-tRNA_amidoTrfase_suB_CS"/>
</dbReference>
<dbReference type="InterPro" id="IPR014746">
    <property type="entry name" value="Gln_synth/guanido_kin_cat_dom"/>
</dbReference>
<dbReference type="NCBIfam" id="TIGR00133">
    <property type="entry name" value="gatB"/>
    <property type="match status" value="1"/>
</dbReference>
<dbReference type="NCBIfam" id="NF004011">
    <property type="entry name" value="PRK05477.1-1"/>
    <property type="match status" value="1"/>
</dbReference>
<dbReference type="NCBIfam" id="NF004012">
    <property type="entry name" value="PRK05477.1-2"/>
    <property type="match status" value="1"/>
</dbReference>
<dbReference type="NCBIfam" id="NF004014">
    <property type="entry name" value="PRK05477.1-4"/>
    <property type="match status" value="1"/>
</dbReference>
<dbReference type="PANTHER" id="PTHR11659">
    <property type="entry name" value="GLUTAMYL-TRNA GLN AMIDOTRANSFERASE SUBUNIT B MITOCHONDRIAL AND PROKARYOTIC PET112-RELATED"/>
    <property type="match status" value="1"/>
</dbReference>
<dbReference type="PANTHER" id="PTHR11659:SF0">
    <property type="entry name" value="GLUTAMYL-TRNA(GLN) AMIDOTRANSFERASE SUBUNIT B, MITOCHONDRIAL"/>
    <property type="match status" value="1"/>
</dbReference>
<dbReference type="Pfam" id="PF02934">
    <property type="entry name" value="GatB_N"/>
    <property type="match status" value="1"/>
</dbReference>
<dbReference type="Pfam" id="PF02637">
    <property type="entry name" value="GatB_Yqey"/>
    <property type="match status" value="1"/>
</dbReference>
<dbReference type="SMART" id="SM00845">
    <property type="entry name" value="GatB_Yqey"/>
    <property type="match status" value="1"/>
</dbReference>
<dbReference type="SUPFAM" id="SSF89095">
    <property type="entry name" value="GatB/YqeY motif"/>
    <property type="match status" value="1"/>
</dbReference>
<dbReference type="SUPFAM" id="SSF55931">
    <property type="entry name" value="Glutamine synthetase/guanido kinase"/>
    <property type="match status" value="1"/>
</dbReference>
<dbReference type="PROSITE" id="PS01234">
    <property type="entry name" value="GATB"/>
    <property type="match status" value="1"/>
</dbReference>
<reference key="1">
    <citation type="journal article" date="2002" name="Mol. Microbiol.">
        <title>Genome sequence of Streptococcus agalactiae, a pathogen causing invasive neonatal disease.</title>
        <authorList>
            <person name="Glaser P."/>
            <person name="Rusniok C."/>
            <person name="Buchrieser C."/>
            <person name="Chevalier F."/>
            <person name="Frangeul L."/>
            <person name="Msadek T."/>
            <person name="Zouine M."/>
            <person name="Couve E."/>
            <person name="Lalioui L."/>
            <person name="Poyart C."/>
            <person name="Trieu-Cuot P."/>
            <person name="Kunst F."/>
        </authorList>
    </citation>
    <scope>NUCLEOTIDE SEQUENCE [LARGE SCALE GENOMIC DNA]</scope>
    <source>
        <strain>NEM316</strain>
    </source>
</reference>
<proteinExistence type="inferred from homology"/>
<keyword id="KW-0067">ATP-binding</keyword>
<keyword id="KW-0436">Ligase</keyword>
<keyword id="KW-0547">Nucleotide-binding</keyword>
<keyword id="KW-0648">Protein biosynthesis</keyword>
<organism>
    <name type="scientific">Streptococcus agalactiae serotype III (strain NEM316)</name>
    <dbReference type="NCBI Taxonomy" id="211110"/>
    <lineage>
        <taxon>Bacteria</taxon>
        <taxon>Bacillati</taxon>
        <taxon>Bacillota</taxon>
        <taxon>Bacilli</taxon>
        <taxon>Lactobacillales</taxon>
        <taxon>Streptococcaceae</taxon>
        <taxon>Streptococcus</taxon>
    </lineage>
</organism>
<gene>
    <name evidence="1" type="primary">gatB</name>
    <name type="ordered locus">gbs1711</name>
</gene>
<protein>
    <recommendedName>
        <fullName evidence="1">Aspartyl/glutamyl-tRNA(Asn/Gln) amidotransferase subunit B</fullName>
        <shortName evidence="1">Asp/Glu-ADT subunit B</shortName>
        <ecNumber evidence="1">6.3.5.-</ecNumber>
    </recommendedName>
</protein>
<name>GATB_STRA3</name>